<accession>B4TF12</accession>
<proteinExistence type="inferred from homology"/>
<sequence length="166" mass="19592">MSEPTSRRPAYARLLDRAVRILAVRDHSEQELRRKLSAPVMGKNGPEEIDATADDYERVIAWCHEHHYLDDERFVMRFIASRSRKGYGPARICQELNQKGISRESTEKAMRECEIDWSEMAHEQAVRKYGEPLPSNFSEKVKVQRFLLYRGYLMDDIQQIWRNFAD</sequence>
<evidence type="ECO:0000255" key="1">
    <source>
        <dbReference type="HAMAP-Rule" id="MF_01114"/>
    </source>
</evidence>
<feature type="chain" id="PRO_1000137190" description="Regulatory protein RecX">
    <location>
        <begin position="1"/>
        <end position="166"/>
    </location>
</feature>
<gene>
    <name evidence="1" type="primary">recX</name>
    <name type="ordered locus">SeHA_C3014</name>
</gene>
<keyword id="KW-0963">Cytoplasm</keyword>
<protein>
    <recommendedName>
        <fullName evidence="1">Regulatory protein RecX</fullName>
    </recommendedName>
</protein>
<organism>
    <name type="scientific">Salmonella heidelberg (strain SL476)</name>
    <dbReference type="NCBI Taxonomy" id="454169"/>
    <lineage>
        <taxon>Bacteria</taxon>
        <taxon>Pseudomonadati</taxon>
        <taxon>Pseudomonadota</taxon>
        <taxon>Gammaproteobacteria</taxon>
        <taxon>Enterobacterales</taxon>
        <taxon>Enterobacteriaceae</taxon>
        <taxon>Salmonella</taxon>
    </lineage>
</organism>
<name>RECX_SALHS</name>
<reference key="1">
    <citation type="journal article" date="2011" name="J. Bacteriol.">
        <title>Comparative genomics of 28 Salmonella enterica isolates: evidence for CRISPR-mediated adaptive sublineage evolution.</title>
        <authorList>
            <person name="Fricke W.F."/>
            <person name="Mammel M.K."/>
            <person name="McDermott P.F."/>
            <person name="Tartera C."/>
            <person name="White D.G."/>
            <person name="Leclerc J.E."/>
            <person name="Ravel J."/>
            <person name="Cebula T.A."/>
        </authorList>
    </citation>
    <scope>NUCLEOTIDE SEQUENCE [LARGE SCALE GENOMIC DNA]</scope>
    <source>
        <strain>SL476</strain>
    </source>
</reference>
<dbReference type="EMBL" id="CP001120">
    <property type="protein sequence ID" value="ACF69346.1"/>
    <property type="molecule type" value="Genomic_DNA"/>
</dbReference>
<dbReference type="RefSeq" id="WP_001294858.1">
    <property type="nucleotide sequence ID" value="NC_011083.1"/>
</dbReference>
<dbReference type="SMR" id="B4TF12"/>
<dbReference type="KEGG" id="seh:SeHA_C3014"/>
<dbReference type="HOGENOM" id="CLU_066607_3_2_6"/>
<dbReference type="Proteomes" id="UP000001866">
    <property type="component" value="Chromosome"/>
</dbReference>
<dbReference type="GO" id="GO:0005737">
    <property type="term" value="C:cytoplasm"/>
    <property type="evidence" value="ECO:0007669"/>
    <property type="project" value="UniProtKB-SubCell"/>
</dbReference>
<dbReference type="GO" id="GO:0006282">
    <property type="term" value="P:regulation of DNA repair"/>
    <property type="evidence" value="ECO:0007669"/>
    <property type="project" value="UniProtKB-UniRule"/>
</dbReference>
<dbReference type="FunFam" id="1.10.10.10:FF:000133">
    <property type="entry name" value="Regulatory protein RecX"/>
    <property type="match status" value="1"/>
</dbReference>
<dbReference type="FunFam" id="1.10.10.10:FF:000134">
    <property type="entry name" value="Regulatory protein RecX"/>
    <property type="match status" value="1"/>
</dbReference>
<dbReference type="Gene3D" id="1.10.10.10">
    <property type="entry name" value="Winged helix-like DNA-binding domain superfamily/Winged helix DNA-binding domain"/>
    <property type="match status" value="3"/>
</dbReference>
<dbReference type="HAMAP" id="MF_01114">
    <property type="entry name" value="RecX"/>
    <property type="match status" value="1"/>
</dbReference>
<dbReference type="InterPro" id="IPR053926">
    <property type="entry name" value="RecX_HTH_1st"/>
</dbReference>
<dbReference type="InterPro" id="IPR053924">
    <property type="entry name" value="RecX_HTH_2nd"/>
</dbReference>
<dbReference type="InterPro" id="IPR053925">
    <property type="entry name" value="RecX_HTH_3rd"/>
</dbReference>
<dbReference type="InterPro" id="IPR003783">
    <property type="entry name" value="Regulatory_RecX"/>
</dbReference>
<dbReference type="InterPro" id="IPR036388">
    <property type="entry name" value="WH-like_DNA-bd_sf"/>
</dbReference>
<dbReference type="NCBIfam" id="NF001052">
    <property type="entry name" value="PRK00117.1-1"/>
    <property type="match status" value="1"/>
</dbReference>
<dbReference type="PANTHER" id="PTHR33602">
    <property type="entry name" value="REGULATORY PROTEIN RECX FAMILY PROTEIN"/>
    <property type="match status" value="1"/>
</dbReference>
<dbReference type="PANTHER" id="PTHR33602:SF1">
    <property type="entry name" value="REGULATORY PROTEIN RECX FAMILY PROTEIN"/>
    <property type="match status" value="1"/>
</dbReference>
<dbReference type="Pfam" id="PF21982">
    <property type="entry name" value="RecX_HTH1"/>
    <property type="match status" value="1"/>
</dbReference>
<dbReference type="Pfam" id="PF02631">
    <property type="entry name" value="RecX_HTH2"/>
    <property type="match status" value="1"/>
</dbReference>
<dbReference type="Pfam" id="PF21981">
    <property type="entry name" value="RecX_HTH3"/>
    <property type="match status" value="1"/>
</dbReference>
<comment type="function">
    <text evidence="1">Modulates RecA activity.</text>
</comment>
<comment type="subcellular location">
    <subcellularLocation>
        <location evidence="1">Cytoplasm</location>
    </subcellularLocation>
</comment>
<comment type="similarity">
    <text evidence="1">Belongs to the RecX family.</text>
</comment>